<accession>A2BWH6</accession>
<proteinExistence type="inferred from homology"/>
<reference key="1">
    <citation type="journal article" date="2007" name="PLoS Genet.">
        <title>Patterns and implications of gene gain and loss in the evolution of Prochlorococcus.</title>
        <authorList>
            <person name="Kettler G.C."/>
            <person name="Martiny A.C."/>
            <person name="Huang K."/>
            <person name="Zucker J."/>
            <person name="Coleman M.L."/>
            <person name="Rodrigue S."/>
            <person name="Chen F."/>
            <person name="Lapidus A."/>
            <person name="Ferriera S."/>
            <person name="Johnson J."/>
            <person name="Steglich C."/>
            <person name="Church G.M."/>
            <person name="Richardson P."/>
            <person name="Chisholm S.W."/>
        </authorList>
    </citation>
    <scope>NUCLEOTIDE SEQUENCE [LARGE SCALE GENOMIC DNA]</scope>
    <source>
        <strain>MIT 9515</strain>
    </source>
</reference>
<evidence type="ECO:0000255" key="1">
    <source>
        <dbReference type="HAMAP-Rule" id="MF_00340"/>
    </source>
</evidence>
<evidence type="ECO:0000305" key="2"/>
<protein>
    <recommendedName>
        <fullName evidence="1">Large ribosomal subunit protein bL32</fullName>
    </recommendedName>
    <alternativeName>
        <fullName evidence="2">50S ribosomal protein L32</fullName>
    </alternativeName>
</protein>
<gene>
    <name evidence="1" type="primary">rpmF</name>
    <name evidence="1" type="synonym">rpl32</name>
    <name type="ordered locus">P9515_09301</name>
</gene>
<organism>
    <name type="scientific">Prochlorococcus marinus (strain MIT 9515)</name>
    <dbReference type="NCBI Taxonomy" id="167542"/>
    <lineage>
        <taxon>Bacteria</taxon>
        <taxon>Bacillati</taxon>
        <taxon>Cyanobacteriota</taxon>
        <taxon>Cyanophyceae</taxon>
        <taxon>Synechococcales</taxon>
        <taxon>Prochlorococcaceae</taxon>
        <taxon>Prochlorococcus</taxon>
    </lineage>
</organism>
<feature type="chain" id="PRO_0000296530" description="Large ribosomal subunit protein bL32">
    <location>
        <begin position="1"/>
        <end position="58"/>
    </location>
</feature>
<sequence length="58" mass="6392">MAVPKKKKSKSKRNHRHAVWKGKAALAAQKAISLGKSVLTGKAQGFVYPIDEEEESEE</sequence>
<keyword id="KW-0687">Ribonucleoprotein</keyword>
<keyword id="KW-0689">Ribosomal protein</keyword>
<dbReference type="EMBL" id="CP000552">
    <property type="protein sequence ID" value="ABM72137.1"/>
    <property type="molecule type" value="Genomic_DNA"/>
</dbReference>
<dbReference type="RefSeq" id="WP_011820240.1">
    <property type="nucleotide sequence ID" value="NC_008817.1"/>
</dbReference>
<dbReference type="SMR" id="A2BWH6"/>
<dbReference type="STRING" id="167542.P9515_09301"/>
<dbReference type="GeneID" id="60201859"/>
<dbReference type="KEGG" id="pmc:P9515_09301"/>
<dbReference type="eggNOG" id="COG0333">
    <property type="taxonomic scope" value="Bacteria"/>
</dbReference>
<dbReference type="HOGENOM" id="CLU_199882_0_0_3"/>
<dbReference type="OrthoDB" id="541730at2"/>
<dbReference type="Proteomes" id="UP000001589">
    <property type="component" value="Chromosome"/>
</dbReference>
<dbReference type="GO" id="GO:0015934">
    <property type="term" value="C:large ribosomal subunit"/>
    <property type="evidence" value="ECO:0007669"/>
    <property type="project" value="InterPro"/>
</dbReference>
<dbReference type="GO" id="GO:0003735">
    <property type="term" value="F:structural constituent of ribosome"/>
    <property type="evidence" value="ECO:0007669"/>
    <property type="project" value="InterPro"/>
</dbReference>
<dbReference type="GO" id="GO:0006412">
    <property type="term" value="P:translation"/>
    <property type="evidence" value="ECO:0007669"/>
    <property type="project" value="UniProtKB-UniRule"/>
</dbReference>
<dbReference type="HAMAP" id="MF_00340">
    <property type="entry name" value="Ribosomal_bL32"/>
    <property type="match status" value="1"/>
</dbReference>
<dbReference type="InterPro" id="IPR002677">
    <property type="entry name" value="Ribosomal_bL32"/>
</dbReference>
<dbReference type="InterPro" id="IPR044958">
    <property type="entry name" value="Ribosomal_bL32_plant/cyanobact"/>
</dbReference>
<dbReference type="InterPro" id="IPR011332">
    <property type="entry name" value="Ribosomal_zn-bd"/>
</dbReference>
<dbReference type="NCBIfam" id="TIGR01031">
    <property type="entry name" value="rpmF_bact"/>
    <property type="match status" value="1"/>
</dbReference>
<dbReference type="PANTHER" id="PTHR36083">
    <property type="entry name" value="50S RIBOSOMAL PROTEIN L32, CHLOROPLASTIC"/>
    <property type="match status" value="1"/>
</dbReference>
<dbReference type="PANTHER" id="PTHR36083:SF1">
    <property type="entry name" value="LARGE RIBOSOMAL SUBUNIT PROTEIN BL32C"/>
    <property type="match status" value="1"/>
</dbReference>
<dbReference type="Pfam" id="PF01783">
    <property type="entry name" value="Ribosomal_L32p"/>
    <property type="match status" value="1"/>
</dbReference>
<dbReference type="SUPFAM" id="SSF57829">
    <property type="entry name" value="Zn-binding ribosomal proteins"/>
    <property type="match status" value="1"/>
</dbReference>
<comment type="similarity">
    <text evidence="1">Belongs to the bacterial ribosomal protein bL32 family.</text>
</comment>
<name>RL32_PROM5</name>